<name>ERK25_HUMAN</name>
<dbReference type="EMBL" id="AY371029">
    <property type="protein sequence ID" value="AAQ76762.1"/>
    <property type="molecule type" value="mRNA"/>
</dbReference>
<dbReference type="EMBL" id="AY371030">
    <property type="protein sequence ID" value="AAQ76763.1"/>
    <property type="molecule type" value="mRNA"/>
</dbReference>
<dbReference type="EMBL" id="AY371033">
    <property type="protein sequence ID" value="AAQ76766.1"/>
    <property type="molecule type" value="mRNA"/>
</dbReference>
<dbReference type="EMBL" id="AY371034">
    <property type="protein sequence ID" value="AAQ76767.1"/>
    <property type="molecule type" value="mRNA"/>
</dbReference>
<dbReference type="EMBL" id="AY371035">
    <property type="protein sequence ID" value="AAQ76768.1"/>
    <property type="molecule type" value="mRNA"/>
</dbReference>
<dbReference type="EMBL" id="AY371036">
    <property type="protein sequence ID" value="AAQ76769.1"/>
    <property type="molecule type" value="mRNA"/>
</dbReference>
<dbReference type="EMBL" id="AY371042">
    <property type="protein sequence ID" value="AAQ76775.1"/>
    <property type="molecule type" value="mRNA"/>
</dbReference>
<dbReference type="EMBL" id="AY371043">
    <property type="protein sequence ID" value="AAQ76776.1"/>
    <property type="molecule type" value="mRNA"/>
</dbReference>
<dbReference type="EMBL" id="AY371044">
    <property type="protein sequence ID" value="AAQ76777.1"/>
    <property type="molecule type" value="mRNA"/>
</dbReference>
<dbReference type="EMBL" id="AY371045">
    <property type="protein sequence ID" value="AAQ76778.1"/>
    <property type="molecule type" value="mRNA"/>
</dbReference>
<dbReference type="EMBL" id="AY395517">
    <property type="protein sequence ID" value="AAQ84100.1"/>
    <property type="molecule type" value="mRNA"/>
</dbReference>
<dbReference type="EMBL" id="AY395519">
    <property type="protein sequence ID" value="AAQ84102.1"/>
    <property type="molecule type" value="mRNA"/>
</dbReference>
<dbReference type="EMBL" id="AY395522">
    <property type="protein sequence ID" value="AAQ84105.1"/>
    <property type="molecule type" value="mRNA"/>
</dbReference>
<dbReference type="EMBL" id="AP000776">
    <property type="status" value="NOT_ANNOTATED_CDS"/>
    <property type="molecule type" value="Genomic_DNA"/>
</dbReference>
<dbReference type="EMBL" id="CF227268">
    <property type="status" value="NOT_ANNOTATED_CDS"/>
    <property type="molecule type" value="mRNA"/>
</dbReference>
<dbReference type="SMR" id="P61579"/>
<dbReference type="BioMuta" id="HGNC:39039"/>
<dbReference type="MassIVE" id="P61579"/>
<dbReference type="GeneCards" id="ERVK-25"/>
<dbReference type="HGNC" id="HGNC:39039">
    <property type="gene designation" value="ERVK-25"/>
</dbReference>
<dbReference type="neXtProt" id="NX_P61579"/>
<dbReference type="PhylomeDB" id="P61579"/>
<dbReference type="Pharos" id="P61579">
    <property type="development level" value="Tdark"/>
</dbReference>
<dbReference type="Proteomes" id="UP000005640">
    <property type="component" value="Unplaced"/>
</dbReference>
<dbReference type="GO" id="GO:0005737">
    <property type="term" value="C:cytoplasm"/>
    <property type="evidence" value="ECO:0007669"/>
    <property type="project" value="UniProtKB-SubCell"/>
</dbReference>
<dbReference type="GO" id="GO:0005730">
    <property type="term" value="C:nucleolus"/>
    <property type="evidence" value="ECO:0007669"/>
    <property type="project" value="UniProtKB-SubCell"/>
</dbReference>
<dbReference type="GO" id="GO:0003723">
    <property type="term" value="F:RNA binding"/>
    <property type="evidence" value="ECO:0007669"/>
    <property type="project" value="UniProtKB-KW"/>
</dbReference>
<dbReference type="GO" id="GO:0051028">
    <property type="term" value="P:mRNA transport"/>
    <property type="evidence" value="ECO:0007669"/>
    <property type="project" value="UniProtKB-KW"/>
</dbReference>
<dbReference type="Pfam" id="PF15695">
    <property type="entry name" value="HERV-K_REC"/>
    <property type="match status" value="1"/>
</dbReference>
<sequence>MNPSEMQRKAPPRRRRHRNRAPLTHKMNKMVTSEEQMKLPSTKKAEPPTWAQLKKLTQLATKYLENTKVTQTPESMLLAALMIVSMVSAGVPNSSEETATIENGP</sequence>
<evidence type="ECO:0000250" key="1"/>
<evidence type="ECO:0000255" key="2"/>
<evidence type="ECO:0000256" key="3">
    <source>
        <dbReference type="SAM" id="MobiDB-lite"/>
    </source>
</evidence>
<gene>
    <name type="primary">ERVK-25</name>
</gene>
<feature type="chain" id="PRO_0000186783" description="Endogenous retrovirus group K member 25 Rec protein">
    <location>
        <begin position="1"/>
        <end position="105"/>
    </location>
</feature>
<feature type="region of interest" description="Disordered" evidence="3">
    <location>
        <begin position="1"/>
        <end position="49"/>
    </location>
</feature>
<feature type="short sequence motif" description="Nuclear localization signal" evidence="2">
    <location>
        <begin position="13"/>
        <end position="20"/>
    </location>
</feature>
<feature type="short sequence motif" description="Nuclear export signal" evidence="2">
    <location>
        <begin position="50"/>
        <end position="59"/>
    </location>
</feature>
<feature type="compositionally biased region" description="Basic residues" evidence="3">
    <location>
        <begin position="10"/>
        <end position="20"/>
    </location>
</feature>
<proteinExistence type="evidence at protein level"/>
<reference key="1">
    <citation type="journal article" date="2004" name="Virology">
        <title>Human endogenous retrovirus HERV-K(HML-2) proviruses with Rec protein coding capacity and transcriptional activity.</title>
        <authorList>
            <person name="Mayer J."/>
            <person name="Ehlhardt S."/>
            <person name="Seifert M."/>
            <person name="Sauter M."/>
            <person name="Mueller-Lantzsch N."/>
            <person name="Mehraein Y."/>
            <person name="Zang K.-D."/>
            <person name="Meese E.U."/>
        </authorList>
    </citation>
    <scope>NUCLEOTIDE SEQUENCE [MRNA]</scope>
    <scope>CHARACTERIZATION</scope>
    <source>
        <tissue>Synovial fluid</tissue>
    </source>
</reference>
<reference key="2">
    <citation type="submission" date="1999-11" db="EMBL/GenBank/DDBJ databases">
        <authorList>
            <person name="Hattori M."/>
            <person name="Ishii K."/>
            <person name="Toyoda A."/>
            <person name="Taylor T.D."/>
            <person name="Hong-Seog P."/>
            <person name="Fujiyama A."/>
            <person name="Yada T."/>
            <person name="Totoki Y."/>
            <person name="Watanabe H."/>
            <person name="Sakaki Y."/>
        </authorList>
    </citation>
    <scope>NUCLEOTIDE SEQUENCE [GENOMIC DNA]</scope>
</reference>
<reference key="3">
    <citation type="submission" date="2003-08" db="EMBL/GenBank/DDBJ databases">
        <title>Signaling networks that control human ES cell growth and differentiation elucidated by transcriptome characterization.</title>
        <authorList>
            <person name="Brandenberger R."/>
            <person name="Wei H."/>
            <person name="Zhang S."/>
            <person name="Lei S."/>
            <person name="Murage J."/>
            <person name="Xu C."/>
            <person name="Fang R."/>
            <person name="Guegler K."/>
            <person name="Lebkowski J."/>
            <person name="Stanton L.W."/>
        </authorList>
    </citation>
    <scope>NUCLEOTIDE SEQUENCE [MRNA]</scope>
</reference>
<organism>
    <name type="scientific">Homo sapiens</name>
    <name type="common">Human</name>
    <dbReference type="NCBI Taxonomy" id="9606"/>
    <lineage>
        <taxon>Eukaryota</taxon>
        <taxon>Metazoa</taxon>
        <taxon>Chordata</taxon>
        <taxon>Craniata</taxon>
        <taxon>Vertebrata</taxon>
        <taxon>Euteleostomi</taxon>
        <taxon>Mammalia</taxon>
        <taxon>Eutheria</taxon>
        <taxon>Euarchontoglires</taxon>
        <taxon>Primates</taxon>
        <taxon>Haplorrhini</taxon>
        <taxon>Catarrhini</taxon>
        <taxon>Hominidae</taxon>
        <taxon>Homo</taxon>
    </lineage>
</organism>
<comment type="function">
    <text evidence="1">Retroviral replication requires the nuclear export and translation of unspliced, singly-spliced and multiply-spliced derivatives of the initial genomic transcript. Rec interacts with a highly structured RNA element (RcRE) present in the viral 3'LTR and recruits the cellular nuclear export machinery. This permits export to the cytoplasm of unspliced genomic or incompletely spliced subgenomic viral transcripts (By similarity).</text>
</comment>
<comment type="subunit">
    <text evidence="1">Forms homodimers, homotrimers, and homotetramers via a C-terminal domain. Associates with XPO1 and with ZNF145 (By similarity).</text>
</comment>
<comment type="subcellular location">
    <subcellularLocation>
        <location evidence="1">Cytoplasm</location>
    </subcellularLocation>
    <subcellularLocation>
        <location evidence="1">Nucleus</location>
        <location evidence="1">Nucleolus</location>
    </subcellularLocation>
    <text evidence="1">Shuttles between the nucleus and cytoplasm. When in the nucleus, resides in the nucleolus (By similarity).</text>
</comment>
<comment type="miscellaneous">
    <text>Despite functional similarity, Rec shares almost no sequence homology with HIV-1 Rev and HTLV-1 Rex.</text>
</comment>
<comment type="miscellaneous">
    <text>Has a type 2 genome. The HERV-K(HML-2) family contains type 1 and type 2 genomes depending on the absence or presence of 292 nucleotides at the 5'-end of the env gene. Rec proteins are translated from a doubly spliced transcript expressed exclusively by HERV-K(HML-2) type 2 proviral genomes. The first exon comprises the 87 N-terminal amino acids of the HERV-K(HMLM-2) type 2 envelope protein. The second exon (18 amino acids) is positioned in the 3' part of the proviral genome.</text>
</comment>
<protein>
    <recommendedName>
        <fullName>Endogenous retrovirus group K member 25 Rec protein</fullName>
    </recommendedName>
    <alternativeName>
        <fullName>Endogenous retrovirus group K member 25</fullName>
    </alternativeName>
    <alternativeName>
        <fullName>HERV-K_11q22.1 provirus Rec protein</fullName>
    </alternativeName>
</protein>
<accession>P61579</accession>
<accession>Q53Z28</accession>
<keyword id="KW-0963">Cytoplasm</keyword>
<keyword id="KW-0895">ERV</keyword>
<keyword id="KW-0509">mRNA transport</keyword>
<keyword id="KW-0539">Nucleus</keyword>
<keyword id="KW-1185">Reference proteome</keyword>
<keyword id="KW-0694">RNA-binding</keyword>
<keyword id="KW-0813">Transport</keyword>
<keyword id="KW-0814">Transposable element</keyword>